<protein>
    <recommendedName>
        <fullName>Putative transmembrane protein ORF289</fullName>
    </recommendedName>
</protein>
<dbReference type="EMBL" id="AJ854042">
    <property type="protein sequence ID" value="CAH69429.1"/>
    <property type="molecule type" value="Genomic_DNA"/>
</dbReference>
<dbReference type="RefSeq" id="YP_001496967.1">
    <property type="nucleotide sequence ID" value="NC_009884.1"/>
</dbReference>
<dbReference type="KEGG" id="vg:5656093"/>
<dbReference type="Proteomes" id="UP000006364">
    <property type="component" value="Genome"/>
</dbReference>
<dbReference type="GO" id="GO:0033644">
    <property type="term" value="C:host cell membrane"/>
    <property type="evidence" value="ECO:0007669"/>
    <property type="project" value="UniProtKB-SubCell"/>
</dbReference>
<dbReference type="GO" id="GO:0016020">
    <property type="term" value="C:membrane"/>
    <property type="evidence" value="ECO:0007669"/>
    <property type="project" value="UniProtKB-KW"/>
</dbReference>
<organismHost>
    <name type="scientific">Acidianus sp. F28</name>
    <dbReference type="NCBI Taxonomy" id="315458"/>
</organismHost>
<accession>Q573C7</accession>
<feature type="chain" id="PRO_0000384527" description="Putative transmembrane protein ORF289">
    <location>
        <begin position="1"/>
        <end position="289"/>
    </location>
</feature>
<feature type="topological domain" description="Extracellular" evidence="1">
    <location>
        <begin position="1"/>
        <end position="152"/>
    </location>
</feature>
<feature type="transmembrane region" description="Helical" evidence="1">
    <location>
        <begin position="153"/>
        <end position="173"/>
    </location>
</feature>
<feature type="topological domain" description="Cytoplasmic" evidence="1">
    <location>
        <begin position="174"/>
        <end position="234"/>
    </location>
</feature>
<feature type="transmembrane region" description="Helical" evidence="1">
    <location>
        <begin position="235"/>
        <end position="255"/>
    </location>
</feature>
<feature type="topological domain" description="Extracellular" evidence="1">
    <location>
        <begin position="256"/>
        <end position="289"/>
    </location>
</feature>
<evidence type="ECO:0000255" key="1"/>
<evidence type="ECO:0000305" key="2"/>
<gene>
    <name type="ORF">ORF289</name>
</gene>
<keyword id="KW-1043">Host membrane</keyword>
<keyword id="KW-0472">Membrane</keyword>
<keyword id="KW-1185">Reference proteome</keyword>
<keyword id="KW-0812">Transmembrane</keyword>
<keyword id="KW-1133">Transmembrane helix</keyword>
<sequence length="289" mass="31264">MAIAKEFLLTVLNYIANGVVNVQSSTTQAVTTLAPYQIIAIMKNNNVTVSRTTITSISVSDVVNASQEETLTIRYSGTDASPFTYTTDEIEIWASTQSALLYKIADIQLQTPLSKTEHDYLNIEYEIIITAGASYTTTSSMSQYTSVVTFRTLVAPILYFFALFLVPAWSTVLKQNPTFPQSQLSNYISPSSYQGINAMYVGSNQVTIVSKLVGFGTTTVSIVVNGEVTSTQVNAPIFIGVTTPSGVLVLAYNYYSGTISKYVSLTVTTTYGSATVINQFETKTTGGTT</sequence>
<proteinExistence type="predicted"/>
<name>Y289_AFV2P</name>
<organism>
    <name type="scientific">Acidianus filamentous virus 2 (isolate Italy/Pozzuoli)</name>
    <name type="common">AFV-2</name>
    <dbReference type="NCBI Taxonomy" id="654910"/>
    <lineage>
        <taxon>Viruses</taxon>
        <taxon>Adnaviria</taxon>
        <taxon>Zilligvirae</taxon>
        <taxon>Taleaviricota</taxon>
        <taxon>Tokiviricetes</taxon>
        <taxon>Ligamenvirales</taxon>
        <taxon>Lipothrixviridae</taxon>
        <taxon>Deltalipothrixvirus</taxon>
        <taxon>Acidianus filamentous virus 2</taxon>
    </lineage>
</organism>
<reference key="1">
    <citation type="journal article" date="2005" name="J. Bacteriol.">
        <title>Structure and genome organization of AFV2, a novel archaeal lipothrixvirus with unusual terminal and core structures.</title>
        <authorList>
            <person name="Haring M."/>
            <person name="Vestergaard G."/>
            <person name="Brugger K."/>
            <person name="Rachel R."/>
            <person name="Garrett R.A."/>
            <person name="Prangishvili D."/>
        </authorList>
    </citation>
    <scope>NUCLEOTIDE SEQUENCE [GENOMIC DNA]</scope>
</reference>
<comment type="subcellular location">
    <subcellularLocation>
        <location evidence="2">Host membrane</location>
        <topology evidence="2">Multi-pass membrane protein</topology>
    </subcellularLocation>
</comment>